<dbReference type="EC" id="2.7.7.56" evidence="1"/>
<dbReference type="EMBL" id="CP001252">
    <property type="protein sequence ID" value="ACK44929.1"/>
    <property type="molecule type" value="Genomic_DNA"/>
</dbReference>
<dbReference type="RefSeq" id="WP_006079862.1">
    <property type="nucleotide sequence ID" value="NC_011663.1"/>
</dbReference>
<dbReference type="SMR" id="B8E4I8"/>
<dbReference type="GeneID" id="11770720"/>
<dbReference type="KEGG" id="sbp:Sbal223_0395"/>
<dbReference type="HOGENOM" id="CLU_050858_0_0_6"/>
<dbReference type="Proteomes" id="UP000002507">
    <property type="component" value="Chromosome"/>
</dbReference>
<dbReference type="GO" id="GO:0000175">
    <property type="term" value="F:3'-5'-RNA exonuclease activity"/>
    <property type="evidence" value="ECO:0007669"/>
    <property type="project" value="UniProtKB-UniRule"/>
</dbReference>
<dbReference type="GO" id="GO:0000049">
    <property type="term" value="F:tRNA binding"/>
    <property type="evidence" value="ECO:0007669"/>
    <property type="project" value="UniProtKB-UniRule"/>
</dbReference>
<dbReference type="GO" id="GO:0009022">
    <property type="term" value="F:tRNA nucleotidyltransferase activity"/>
    <property type="evidence" value="ECO:0007669"/>
    <property type="project" value="UniProtKB-UniRule"/>
</dbReference>
<dbReference type="GO" id="GO:0016075">
    <property type="term" value="P:rRNA catabolic process"/>
    <property type="evidence" value="ECO:0007669"/>
    <property type="project" value="UniProtKB-UniRule"/>
</dbReference>
<dbReference type="GO" id="GO:0006364">
    <property type="term" value="P:rRNA processing"/>
    <property type="evidence" value="ECO:0007669"/>
    <property type="project" value="UniProtKB-KW"/>
</dbReference>
<dbReference type="GO" id="GO:0008033">
    <property type="term" value="P:tRNA processing"/>
    <property type="evidence" value="ECO:0007669"/>
    <property type="project" value="UniProtKB-UniRule"/>
</dbReference>
<dbReference type="CDD" id="cd11362">
    <property type="entry name" value="RNase_PH_bact"/>
    <property type="match status" value="1"/>
</dbReference>
<dbReference type="FunFam" id="3.30.230.70:FF:000003">
    <property type="entry name" value="Ribonuclease PH"/>
    <property type="match status" value="1"/>
</dbReference>
<dbReference type="Gene3D" id="3.30.230.70">
    <property type="entry name" value="GHMP Kinase, N-terminal domain"/>
    <property type="match status" value="1"/>
</dbReference>
<dbReference type="HAMAP" id="MF_00564">
    <property type="entry name" value="RNase_PH"/>
    <property type="match status" value="1"/>
</dbReference>
<dbReference type="InterPro" id="IPR001247">
    <property type="entry name" value="ExoRNase_PH_dom1"/>
</dbReference>
<dbReference type="InterPro" id="IPR015847">
    <property type="entry name" value="ExoRNase_PH_dom2"/>
</dbReference>
<dbReference type="InterPro" id="IPR036345">
    <property type="entry name" value="ExoRNase_PH_dom2_sf"/>
</dbReference>
<dbReference type="InterPro" id="IPR027408">
    <property type="entry name" value="PNPase/RNase_PH_dom_sf"/>
</dbReference>
<dbReference type="InterPro" id="IPR020568">
    <property type="entry name" value="Ribosomal_Su5_D2-typ_SF"/>
</dbReference>
<dbReference type="InterPro" id="IPR050080">
    <property type="entry name" value="RNase_PH"/>
</dbReference>
<dbReference type="InterPro" id="IPR002381">
    <property type="entry name" value="RNase_PH_bac-type"/>
</dbReference>
<dbReference type="InterPro" id="IPR018336">
    <property type="entry name" value="RNase_PH_CS"/>
</dbReference>
<dbReference type="NCBIfam" id="TIGR01966">
    <property type="entry name" value="RNasePH"/>
    <property type="match status" value="1"/>
</dbReference>
<dbReference type="PANTHER" id="PTHR11953">
    <property type="entry name" value="EXOSOME COMPLEX COMPONENT"/>
    <property type="match status" value="1"/>
</dbReference>
<dbReference type="PANTHER" id="PTHR11953:SF0">
    <property type="entry name" value="EXOSOME COMPLEX COMPONENT RRP41"/>
    <property type="match status" value="1"/>
</dbReference>
<dbReference type="Pfam" id="PF01138">
    <property type="entry name" value="RNase_PH"/>
    <property type="match status" value="1"/>
</dbReference>
<dbReference type="Pfam" id="PF03725">
    <property type="entry name" value="RNase_PH_C"/>
    <property type="match status" value="1"/>
</dbReference>
<dbReference type="SUPFAM" id="SSF55666">
    <property type="entry name" value="Ribonuclease PH domain 2-like"/>
    <property type="match status" value="1"/>
</dbReference>
<dbReference type="SUPFAM" id="SSF54211">
    <property type="entry name" value="Ribosomal protein S5 domain 2-like"/>
    <property type="match status" value="1"/>
</dbReference>
<dbReference type="PROSITE" id="PS01277">
    <property type="entry name" value="RIBONUCLEASE_PH"/>
    <property type="match status" value="1"/>
</dbReference>
<evidence type="ECO:0000255" key="1">
    <source>
        <dbReference type="HAMAP-Rule" id="MF_00564"/>
    </source>
</evidence>
<name>RNPH_SHEB2</name>
<gene>
    <name evidence="1" type="primary">rph</name>
    <name type="ordered locus">Sbal223_0395</name>
</gene>
<sequence>MRPSNRTPAQTRPITITRQFTAHAEGSVLVEFGETKVLCTASFTEGVPRFLKGQGQGWVTAEYGMLPRSTHSRMDREAARGKQSGRTQEIQRLIGRALRACVDMKALGENTIVIDCDVIQADGGTRTASITGACVALVDALNWARGKGIIKSNPLKFLIAAVSVGIYKGEAISDLEYIEDSAAETDMNVVMTETGKIIEIQGTAEGEPFSHEELLELLALAKNSIREIVDVQKAALN</sequence>
<reference key="1">
    <citation type="submission" date="2008-12" db="EMBL/GenBank/DDBJ databases">
        <title>Complete sequence of chromosome of Shewanella baltica OS223.</title>
        <authorList>
            <consortium name="US DOE Joint Genome Institute"/>
            <person name="Lucas S."/>
            <person name="Copeland A."/>
            <person name="Lapidus A."/>
            <person name="Glavina del Rio T."/>
            <person name="Dalin E."/>
            <person name="Tice H."/>
            <person name="Bruce D."/>
            <person name="Goodwin L."/>
            <person name="Pitluck S."/>
            <person name="Chertkov O."/>
            <person name="Meincke L."/>
            <person name="Brettin T."/>
            <person name="Detter J.C."/>
            <person name="Han C."/>
            <person name="Kuske C.R."/>
            <person name="Larimer F."/>
            <person name="Land M."/>
            <person name="Hauser L."/>
            <person name="Kyrpides N."/>
            <person name="Ovchinnikova G."/>
            <person name="Brettar I."/>
            <person name="Rodrigues J."/>
            <person name="Konstantinidis K."/>
            <person name="Tiedje J."/>
        </authorList>
    </citation>
    <scope>NUCLEOTIDE SEQUENCE [LARGE SCALE GENOMIC DNA]</scope>
    <source>
        <strain>OS223</strain>
    </source>
</reference>
<keyword id="KW-0548">Nucleotidyltransferase</keyword>
<keyword id="KW-0694">RNA-binding</keyword>
<keyword id="KW-0698">rRNA processing</keyword>
<keyword id="KW-0808">Transferase</keyword>
<keyword id="KW-0819">tRNA processing</keyword>
<keyword id="KW-0820">tRNA-binding</keyword>
<organism>
    <name type="scientific">Shewanella baltica (strain OS223)</name>
    <dbReference type="NCBI Taxonomy" id="407976"/>
    <lineage>
        <taxon>Bacteria</taxon>
        <taxon>Pseudomonadati</taxon>
        <taxon>Pseudomonadota</taxon>
        <taxon>Gammaproteobacteria</taxon>
        <taxon>Alteromonadales</taxon>
        <taxon>Shewanellaceae</taxon>
        <taxon>Shewanella</taxon>
    </lineage>
</organism>
<proteinExistence type="inferred from homology"/>
<protein>
    <recommendedName>
        <fullName evidence="1">Ribonuclease PH</fullName>
        <shortName evidence="1">RNase PH</shortName>
        <ecNumber evidence="1">2.7.7.56</ecNumber>
    </recommendedName>
    <alternativeName>
        <fullName evidence="1">tRNA nucleotidyltransferase</fullName>
    </alternativeName>
</protein>
<accession>B8E4I8</accession>
<feature type="chain" id="PRO_1000146787" description="Ribonuclease PH">
    <location>
        <begin position="1"/>
        <end position="237"/>
    </location>
</feature>
<feature type="binding site" evidence="1">
    <location>
        <position position="86"/>
    </location>
    <ligand>
        <name>phosphate</name>
        <dbReference type="ChEBI" id="CHEBI:43474"/>
        <note>substrate</note>
    </ligand>
</feature>
<feature type="binding site" evidence="1">
    <location>
        <begin position="124"/>
        <end position="126"/>
    </location>
    <ligand>
        <name>phosphate</name>
        <dbReference type="ChEBI" id="CHEBI:43474"/>
        <note>substrate</note>
    </ligand>
</feature>
<comment type="function">
    <text evidence="1">Phosphorolytic 3'-5' exoribonuclease that plays an important role in tRNA 3'-end maturation. Removes nucleotide residues following the 3'-CCA terminus of tRNAs; can also add nucleotides to the ends of RNA molecules by using nucleoside diphosphates as substrates, but this may not be physiologically important. Probably plays a role in initiation of 16S rRNA degradation (leading to ribosome degradation) during starvation.</text>
</comment>
<comment type="catalytic activity">
    <reaction evidence="1">
        <text>tRNA(n+1) + phosphate = tRNA(n) + a ribonucleoside 5'-diphosphate</text>
        <dbReference type="Rhea" id="RHEA:10628"/>
        <dbReference type="Rhea" id="RHEA-COMP:17343"/>
        <dbReference type="Rhea" id="RHEA-COMP:17344"/>
        <dbReference type="ChEBI" id="CHEBI:43474"/>
        <dbReference type="ChEBI" id="CHEBI:57930"/>
        <dbReference type="ChEBI" id="CHEBI:173114"/>
        <dbReference type="EC" id="2.7.7.56"/>
    </reaction>
</comment>
<comment type="subunit">
    <text evidence="1">Homohexameric ring arranged as a trimer of dimers.</text>
</comment>
<comment type="similarity">
    <text evidence="1">Belongs to the RNase PH family.</text>
</comment>